<name>RUVC_ECO45</name>
<protein>
    <recommendedName>
        <fullName evidence="1">Crossover junction endodeoxyribonuclease RuvC</fullName>
        <ecNumber evidence="1">3.1.21.10</ecNumber>
    </recommendedName>
    <alternativeName>
        <fullName evidence="1">Holliday junction nuclease RuvC</fullName>
    </alternativeName>
    <alternativeName>
        <fullName evidence="1">Holliday junction resolvase RuvC</fullName>
    </alternativeName>
</protein>
<comment type="function">
    <text evidence="1">The RuvA-RuvB-RuvC complex processes Holliday junction (HJ) DNA during genetic recombination and DNA repair. Endonuclease that resolves HJ intermediates. Cleaves cruciform DNA by making single-stranded nicks across the HJ at symmetrical positions within the homologous arms, yielding a 5'-phosphate and a 3'-hydroxyl group; requires a central core of homology in the junction. The consensus cleavage sequence is 5'-(A/T)TT(C/G)-3'. Cleavage occurs on the 3'-side of the TT dinucleotide at the point of strand exchange. HJ branch migration catalyzed by RuvA-RuvB allows RuvC to scan DNA until it finds its consensus sequence, where it cleaves and resolves the cruciform DNA.</text>
</comment>
<comment type="catalytic activity">
    <reaction evidence="1">
        <text>Endonucleolytic cleavage at a junction such as a reciprocal single-stranded crossover between two homologous DNA duplexes (Holliday junction).</text>
        <dbReference type="EC" id="3.1.21.10"/>
    </reaction>
</comment>
<comment type="cofactor">
    <cofactor evidence="1">
        <name>Mg(2+)</name>
        <dbReference type="ChEBI" id="CHEBI:18420"/>
    </cofactor>
    <text evidence="1">Binds 2 Mg(2+) ion per subunit.</text>
</comment>
<comment type="subunit">
    <text evidence="1">Homodimer which binds Holliday junction (HJ) DNA. The HJ becomes 2-fold symmetrical on binding to RuvC with unstacked arms; it has a different conformation from HJ DNA in complex with RuvA. In the full resolvosome a probable DNA-RuvA(4)-RuvB(12)-RuvC(2) complex forms which resolves the HJ.</text>
</comment>
<comment type="subcellular location">
    <subcellularLocation>
        <location evidence="1">Cytoplasm</location>
    </subcellularLocation>
</comment>
<comment type="similarity">
    <text evidence="1">Belongs to the RuvC family.</text>
</comment>
<evidence type="ECO:0000255" key="1">
    <source>
        <dbReference type="HAMAP-Rule" id="MF_00034"/>
    </source>
</evidence>
<reference key="1">
    <citation type="journal article" date="2009" name="PLoS Genet.">
        <title>Organised genome dynamics in the Escherichia coli species results in highly diverse adaptive paths.</title>
        <authorList>
            <person name="Touchon M."/>
            <person name="Hoede C."/>
            <person name="Tenaillon O."/>
            <person name="Barbe V."/>
            <person name="Baeriswyl S."/>
            <person name="Bidet P."/>
            <person name="Bingen E."/>
            <person name="Bonacorsi S."/>
            <person name="Bouchier C."/>
            <person name="Bouvet O."/>
            <person name="Calteau A."/>
            <person name="Chiapello H."/>
            <person name="Clermont O."/>
            <person name="Cruveiller S."/>
            <person name="Danchin A."/>
            <person name="Diard M."/>
            <person name="Dossat C."/>
            <person name="Karoui M.E."/>
            <person name="Frapy E."/>
            <person name="Garry L."/>
            <person name="Ghigo J.M."/>
            <person name="Gilles A.M."/>
            <person name="Johnson J."/>
            <person name="Le Bouguenec C."/>
            <person name="Lescat M."/>
            <person name="Mangenot S."/>
            <person name="Martinez-Jehanne V."/>
            <person name="Matic I."/>
            <person name="Nassif X."/>
            <person name="Oztas S."/>
            <person name="Petit M.A."/>
            <person name="Pichon C."/>
            <person name="Rouy Z."/>
            <person name="Ruf C.S."/>
            <person name="Schneider D."/>
            <person name="Tourret J."/>
            <person name="Vacherie B."/>
            <person name="Vallenet D."/>
            <person name="Medigue C."/>
            <person name="Rocha E.P.C."/>
            <person name="Denamur E."/>
        </authorList>
    </citation>
    <scope>NUCLEOTIDE SEQUENCE [LARGE SCALE GENOMIC DNA]</scope>
    <source>
        <strain>S88 / ExPEC</strain>
    </source>
</reference>
<gene>
    <name evidence="1" type="primary">ruvC</name>
    <name type="ordered locus">ECS88_1921</name>
</gene>
<organism>
    <name type="scientific">Escherichia coli O45:K1 (strain S88 / ExPEC)</name>
    <dbReference type="NCBI Taxonomy" id="585035"/>
    <lineage>
        <taxon>Bacteria</taxon>
        <taxon>Pseudomonadati</taxon>
        <taxon>Pseudomonadota</taxon>
        <taxon>Gammaproteobacteria</taxon>
        <taxon>Enterobacterales</taxon>
        <taxon>Enterobacteriaceae</taxon>
        <taxon>Escherichia</taxon>
    </lineage>
</organism>
<sequence length="173" mass="18747">MAIILGIDPGSRVTGYGVIRQVGRQLSYLGSGCIRTKVDDLPSRLKLIYAGVTEIITQFQPDYFAIEQVFMAKNADSALKLGQARGVAIVAAVNQELPVFEYAARQVKQTVVGIGSAEKSQVQHMVRTLLKLPANPQADAADALAIAITHCHVSQNAMQMSESRLNLARGRLR</sequence>
<keyword id="KW-0963">Cytoplasm</keyword>
<keyword id="KW-0227">DNA damage</keyword>
<keyword id="KW-0233">DNA recombination</keyword>
<keyword id="KW-0234">DNA repair</keyword>
<keyword id="KW-0238">DNA-binding</keyword>
<keyword id="KW-0255">Endonuclease</keyword>
<keyword id="KW-0378">Hydrolase</keyword>
<keyword id="KW-0460">Magnesium</keyword>
<keyword id="KW-0479">Metal-binding</keyword>
<keyword id="KW-0540">Nuclease</keyword>
<keyword id="KW-1185">Reference proteome</keyword>
<feature type="chain" id="PRO_1000195254" description="Crossover junction endodeoxyribonuclease RuvC">
    <location>
        <begin position="1"/>
        <end position="173"/>
    </location>
</feature>
<feature type="active site" evidence="1">
    <location>
        <position position="8"/>
    </location>
</feature>
<feature type="active site" evidence="1">
    <location>
        <position position="67"/>
    </location>
</feature>
<feature type="active site" evidence="1">
    <location>
        <position position="139"/>
    </location>
</feature>
<feature type="binding site" evidence="1">
    <location>
        <position position="8"/>
    </location>
    <ligand>
        <name>Mg(2+)</name>
        <dbReference type="ChEBI" id="CHEBI:18420"/>
        <label>1</label>
    </ligand>
</feature>
<feature type="binding site" evidence="1">
    <location>
        <position position="67"/>
    </location>
    <ligand>
        <name>Mg(2+)</name>
        <dbReference type="ChEBI" id="CHEBI:18420"/>
        <label>2</label>
    </ligand>
</feature>
<feature type="binding site" evidence="1">
    <location>
        <position position="139"/>
    </location>
    <ligand>
        <name>Mg(2+)</name>
        <dbReference type="ChEBI" id="CHEBI:18420"/>
        <label>1</label>
    </ligand>
</feature>
<dbReference type="EC" id="3.1.21.10" evidence="1"/>
<dbReference type="EMBL" id="CU928161">
    <property type="protein sequence ID" value="CAR03224.1"/>
    <property type="molecule type" value="Genomic_DNA"/>
</dbReference>
<dbReference type="RefSeq" id="WP_001295503.1">
    <property type="nucleotide sequence ID" value="NC_011742.1"/>
</dbReference>
<dbReference type="SMR" id="B7MBS2"/>
<dbReference type="GeneID" id="89516631"/>
<dbReference type="KEGG" id="ecz:ECS88_1921"/>
<dbReference type="HOGENOM" id="CLU_091257_2_1_6"/>
<dbReference type="Proteomes" id="UP000000747">
    <property type="component" value="Chromosome"/>
</dbReference>
<dbReference type="GO" id="GO:0005737">
    <property type="term" value="C:cytoplasm"/>
    <property type="evidence" value="ECO:0007669"/>
    <property type="project" value="UniProtKB-SubCell"/>
</dbReference>
<dbReference type="GO" id="GO:0048476">
    <property type="term" value="C:Holliday junction resolvase complex"/>
    <property type="evidence" value="ECO:0007669"/>
    <property type="project" value="UniProtKB-UniRule"/>
</dbReference>
<dbReference type="GO" id="GO:0008821">
    <property type="term" value="F:crossover junction DNA endonuclease activity"/>
    <property type="evidence" value="ECO:0007669"/>
    <property type="project" value="UniProtKB-UniRule"/>
</dbReference>
<dbReference type="GO" id="GO:0003677">
    <property type="term" value="F:DNA binding"/>
    <property type="evidence" value="ECO:0007669"/>
    <property type="project" value="UniProtKB-KW"/>
</dbReference>
<dbReference type="GO" id="GO:0000287">
    <property type="term" value="F:magnesium ion binding"/>
    <property type="evidence" value="ECO:0007669"/>
    <property type="project" value="UniProtKB-UniRule"/>
</dbReference>
<dbReference type="GO" id="GO:0006310">
    <property type="term" value="P:DNA recombination"/>
    <property type="evidence" value="ECO:0007669"/>
    <property type="project" value="UniProtKB-UniRule"/>
</dbReference>
<dbReference type="GO" id="GO:0006281">
    <property type="term" value="P:DNA repair"/>
    <property type="evidence" value="ECO:0007669"/>
    <property type="project" value="UniProtKB-UniRule"/>
</dbReference>
<dbReference type="CDD" id="cd16962">
    <property type="entry name" value="RuvC"/>
    <property type="match status" value="1"/>
</dbReference>
<dbReference type="FunFam" id="3.30.420.10:FF:000002">
    <property type="entry name" value="Crossover junction endodeoxyribonuclease RuvC"/>
    <property type="match status" value="1"/>
</dbReference>
<dbReference type="Gene3D" id="3.30.420.10">
    <property type="entry name" value="Ribonuclease H-like superfamily/Ribonuclease H"/>
    <property type="match status" value="1"/>
</dbReference>
<dbReference type="HAMAP" id="MF_00034">
    <property type="entry name" value="RuvC"/>
    <property type="match status" value="1"/>
</dbReference>
<dbReference type="InterPro" id="IPR012337">
    <property type="entry name" value="RNaseH-like_sf"/>
</dbReference>
<dbReference type="InterPro" id="IPR036397">
    <property type="entry name" value="RNaseH_sf"/>
</dbReference>
<dbReference type="InterPro" id="IPR020563">
    <property type="entry name" value="X-over_junc_endoDNase_Mg_BS"/>
</dbReference>
<dbReference type="InterPro" id="IPR002176">
    <property type="entry name" value="X-over_junc_endoDNase_RuvC"/>
</dbReference>
<dbReference type="NCBIfam" id="NF000711">
    <property type="entry name" value="PRK00039.2-1"/>
    <property type="match status" value="1"/>
</dbReference>
<dbReference type="NCBIfam" id="TIGR00228">
    <property type="entry name" value="ruvC"/>
    <property type="match status" value="1"/>
</dbReference>
<dbReference type="PANTHER" id="PTHR30194">
    <property type="entry name" value="CROSSOVER JUNCTION ENDODEOXYRIBONUCLEASE RUVC"/>
    <property type="match status" value="1"/>
</dbReference>
<dbReference type="PANTHER" id="PTHR30194:SF3">
    <property type="entry name" value="CROSSOVER JUNCTION ENDODEOXYRIBONUCLEASE RUVC"/>
    <property type="match status" value="1"/>
</dbReference>
<dbReference type="Pfam" id="PF02075">
    <property type="entry name" value="RuvC"/>
    <property type="match status" value="1"/>
</dbReference>
<dbReference type="PRINTS" id="PR00696">
    <property type="entry name" value="RSOLVASERUVC"/>
</dbReference>
<dbReference type="SUPFAM" id="SSF53098">
    <property type="entry name" value="Ribonuclease H-like"/>
    <property type="match status" value="1"/>
</dbReference>
<dbReference type="PROSITE" id="PS01321">
    <property type="entry name" value="RUVC"/>
    <property type="match status" value="1"/>
</dbReference>
<proteinExistence type="inferred from homology"/>
<accession>B7MBS2</accession>